<sequence length="213" mass="23589">MFTIKEEIANAITHGIGVLLSIPALVFLIIFAANYGSAWDIVSFTIFGVSMLLLYLSSTLLHSITHKKTKDILEIIDHSAIYVLIAGTYTPFLLGPLKGTLGFTLLVIVWSLALGGIVFKIFFVKRFILLSTFVYLVMGWLMIIAVKPLYASLSGAGFSLLFLGGILYSVGTIFYIWKKIPFHHAIWHSFVLGGSAAMFFCVLFYCVKVPFLS</sequence>
<organism>
    <name type="scientific">Bacillus subtilis (strain 168)</name>
    <dbReference type="NCBI Taxonomy" id="224308"/>
    <lineage>
        <taxon>Bacteria</taxon>
        <taxon>Bacillati</taxon>
        <taxon>Bacillota</taxon>
        <taxon>Bacilli</taxon>
        <taxon>Bacillales</taxon>
        <taxon>Bacillaceae</taxon>
        <taxon>Bacillus</taxon>
    </lineage>
</organism>
<comment type="subcellular location">
    <subcellularLocation>
        <location evidence="2">Cell membrane</location>
        <topology evidence="2">Multi-pass membrane protein</topology>
    </subcellularLocation>
</comment>
<comment type="similarity">
    <text evidence="2">Belongs to the UPF0073 (Hly-III) family.</text>
</comment>
<protein>
    <recommendedName>
        <fullName>Hemolysin-3 homolog</fullName>
    </recommendedName>
    <alternativeName>
        <fullName>Hemolysin III homolog</fullName>
    </alternativeName>
</protein>
<accession>P54175</accession>
<proteinExistence type="inferred from homology"/>
<reference key="1">
    <citation type="journal article" date="1996" name="Microbiology">
        <title>Organization of the Bacillus subtilis 168 chromosome between kdg and the attachment site of the SP beta prophage: use of long accurate PCR and yeast artificial chromosomes for sequencing.</title>
        <authorList>
            <person name="Capuano V."/>
            <person name="Galleron N."/>
            <person name="Pujic P."/>
            <person name="Sorokin A."/>
            <person name="Ehrlich S.D."/>
        </authorList>
    </citation>
    <scope>NUCLEOTIDE SEQUENCE [GENOMIC DNA]</scope>
    <source>
        <strain>168 / Marburg / ATCC 6051 / DSM 10 / JCM 1465 / NBRC 13719 / NCIMB 3610 / NRRL NRS-744 / VKM B-501</strain>
    </source>
</reference>
<reference key="2">
    <citation type="journal article" date="1997" name="Nature">
        <title>The complete genome sequence of the Gram-positive bacterium Bacillus subtilis.</title>
        <authorList>
            <person name="Kunst F."/>
            <person name="Ogasawara N."/>
            <person name="Moszer I."/>
            <person name="Albertini A.M."/>
            <person name="Alloni G."/>
            <person name="Azevedo V."/>
            <person name="Bertero M.G."/>
            <person name="Bessieres P."/>
            <person name="Bolotin A."/>
            <person name="Borchert S."/>
            <person name="Borriss R."/>
            <person name="Boursier L."/>
            <person name="Brans A."/>
            <person name="Braun M."/>
            <person name="Brignell S.C."/>
            <person name="Bron S."/>
            <person name="Brouillet S."/>
            <person name="Bruschi C.V."/>
            <person name="Caldwell B."/>
            <person name="Capuano V."/>
            <person name="Carter N.M."/>
            <person name="Choi S.-K."/>
            <person name="Codani J.-J."/>
            <person name="Connerton I.F."/>
            <person name="Cummings N.J."/>
            <person name="Daniel R.A."/>
            <person name="Denizot F."/>
            <person name="Devine K.M."/>
            <person name="Duesterhoeft A."/>
            <person name="Ehrlich S.D."/>
            <person name="Emmerson P.T."/>
            <person name="Entian K.-D."/>
            <person name="Errington J."/>
            <person name="Fabret C."/>
            <person name="Ferrari E."/>
            <person name="Foulger D."/>
            <person name="Fritz C."/>
            <person name="Fujita M."/>
            <person name="Fujita Y."/>
            <person name="Fuma S."/>
            <person name="Galizzi A."/>
            <person name="Galleron N."/>
            <person name="Ghim S.-Y."/>
            <person name="Glaser P."/>
            <person name="Goffeau A."/>
            <person name="Golightly E.J."/>
            <person name="Grandi G."/>
            <person name="Guiseppi G."/>
            <person name="Guy B.J."/>
            <person name="Haga K."/>
            <person name="Haiech J."/>
            <person name="Harwood C.R."/>
            <person name="Henaut A."/>
            <person name="Hilbert H."/>
            <person name="Holsappel S."/>
            <person name="Hosono S."/>
            <person name="Hullo M.-F."/>
            <person name="Itaya M."/>
            <person name="Jones L.-M."/>
            <person name="Joris B."/>
            <person name="Karamata D."/>
            <person name="Kasahara Y."/>
            <person name="Klaerr-Blanchard M."/>
            <person name="Klein C."/>
            <person name="Kobayashi Y."/>
            <person name="Koetter P."/>
            <person name="Koningstein G."/>
            <person name="Krogh S."/>
            <person name="Kumano M."/>
            <person name="Kurita K."/>
            <person name="Lapidus A."/>
            <person name="Lardinois S."/>
            <person name="Lauber J."/>
            <person name="Lazarevic V."/>
            <person name="Lee S.-M."/>
            <person name="Levine A."/>
            <person name="Liu H."/>
            <person name="Masuda S."/>
            <person name="Mauel C."/>
            <person name="Medigue C."/>
            <person name="Medina N."/>
            <person name="Mellado R.P."/>
            <person name="Mizuno M."/>
            <person name="Moestl D."/>
            <person name="Nakai S."/>
            <person name="Noback M."/>
            <person name="Noone D."/>
            <person name="O'Reilly M."/>
            <person name="Ogawa K."/>
            <person name="Ogiwara A."/>
            <person name="Oudega B."/>
            <person name="Park S.-H."/>
            <person name="Parro V."/>
            <person name="Pohl T.M."/>
            <person name="Portetelle D."/>
            <person name="Porwollik S."/>
            <person name="Prescott A.M."/>
            <person name="Presecan E."/>
            <person name="Pujic P."/>
            <person name="Purnelle B."/>
            <person name="Rapoport G."/>
            <person name="Rey M."/>
            <person name="Reynolds S."/>
            <person name="Rieger M."/>
            <person name="Rivolta C."/>
            <person name="Rocha E."/>
            <person name="Roche B."/>
            <person name="Rose M."/>
            <person name="Sadaie Y."/>
            <person name="Sato T."/>
            <person name="Scanlan E."/>
            <person name="Schleich S."/>
            <person name="Schroeter R."/>
            <person name="Scoffone F."/>
            <person name="Sekiguchi J."/>
            <person name="Sekowska A."/>
            <person name="Seror S.J."/>
            <person name="Serror P."/>
            <person name="Shin B.-S."/>
            <person name="Soldo B."/>
            <person name="Sorokin A."/>
            <person name="Tacconi E."/>
            <person name="Takagi T."/>
            <person name="Takahashi H."/>
            <person name="Takemaru K."/>
            <person name="Takeuchi M."/>
            <person name="Tamakoshi A."/>
            <person name="Tanaka T."/>
            <person name="Terpstra P."/>
            <person name="Tognoni A."/>
            <person name="Tosato V."/>
            <person name="Uchiyama S."/>
            <person name="Vandenbol M."/>
            <person name="Vannier F."/>
            <person name="Vassarotti A."/>
            <person name="Viari A."/>
            <person name="Wambutt R."/>
            <person name="Wedler E."/>
            <person name="Wedler H."/>
            <person name="Weitzenegger T."/>
            <person name="Winters P."/>
            <person name="Wipat A."/>
            <person name="Yamamoto H."/>
            <person name="Yamane K."/>
            <person name="Yasumoto K."/>
            <person name="Yata K."/>
            <person name="Yoshida K."/>
            <person name="Yoshikawa H.-F."/>
            <person name="Zumstein E."/>
            <person name="Yoshikawa H."/>
            <person name="Danchin A."/>
        </authorList>
    </citation>
    <scope>NUCLEOTIDE SEQUENCE [LARGE SCALE GENOMIC DNA]</scope>
    <source>
        <strain>168</strain>
    </source>
</reference>
<name>HLY3_BACSU</name>
<keyword id="KW-1003">Cell membrane</keyword>
<keyword id="KW-0472">Membrane</keyword>
<keyword id="KW-1185">Reference proteome</keyword>
<keyword id="KW-0812">Transmembrane</keyword>
<keyword id="KW-1133">Transmembrane helix</keyword>
<gene>
    <name type="primary">yplQ</name>
    <name type="ordered locus">BSU21790</name>
</gene>
<feature type="chain" id="PRO_0000176896" description="Hemolysin-3 homolog">
    <location>
        <begin position="1"/>
        <end position="213"/>
    </location>
</feature>
<feature type="transmembrane region" description="Helical" evidence="1">
    <location>
        <begin position="11"/>
        <end position="31"/>
    </location>
</feature>
<feature type="transmembrane region" description="Helical" evidence="1">
    <location>
        <begin position="41"/>
        <end position="61"/>
    </location>
</feature>
<feature type="transmembrane region" description="Helical" evidence="1">
    <location>
        <begin position="75"/>
        <end position="95"/>
    </location>
</feature>
<feature type="transmembrane region" description="Helical" evidence="1">
    <location>
        <begin position="103"/>
        <end position="123"/>
    </location>
</feature>
<feature type="transmembrane region" description="Helical" evidence="1">
    <location>
        <begin position="127"/>
        <end position="147"/>
    </location>
</feature>
<feature type="transmembrane region" description="Helical" evidence="1">
    <location>
        <begin position="157"/>
        <end position="177"/>
    </location>
</feature>
<feature type="transmembrane region" description="Helical" evidence="1">
    <location>
        <begin position="185"/>
        <end position="205"/>
    </location>
</feature>
<evidence type="ECO:0000255" key="1"/>
<evidence type="ECO:0000305" key="2"/>
<dbReference type="EMBL" id="L77246">
    <property type="protein sequence ID" value="AAA96637.1"/>
    <property type="molecule type" value="Genomic_DNA"/>
</dbReference>
<dbReference type="EMBL" id="AL009126">
    <property type="protein sequence ID" value="CAB14097.1"/>
    <property type="molecule type" value="Genomic_DNA"/>
</dbReference>
<dbReference type="PIR" id="D69938">
    <property type="entry name" value="D69938"/>
</dbReference>
<dbReference type="RefSeq" id="NP_390062.1">
    <property type="nucleotide sequence ID" value="NC_000964.3"/>
</dbReference>
<dbReference type="SMR" id="P54175"/>
<dbReference type="FunCoup" id="P54175">
    <property type="interactions" value="40"/>
</dbReference>
<dbReference type="STRING" id="224308.BSU21790"/>
<dbReference type="PaxDb" id="224308-BSU21790"/>
<dbReference type="EnsemblBacteria" id="CAB14097">
    <property type="protein sequence ID" value="CAB14097"/>
    <property type="gene ID" value="BSU_21790"/>
</dbReference>
<dbReference type="GeneID" id="939095"/>
<dbReference type="KEGG" id="bsu:BSU21790"/>
<dbReference type="PATRIC" id="fig|224308.179.peg.2381"/>
<dbReference type="eggNOG" id="COG1272">
    <property type="taxonomic scope" value="Bacteria"/>
</dbReference>
<dbReference type="InParanoid" id="P54175"/>
<dbReference type="OrthoDB" id="9813689at2"/>
<dbReference type="PhylomeDB" id="P54175"/>
<dbReference type="BioCyc" id="BSUB:BSU21790-MONOMER"/>
<dbReference type="Proteomes" id="UP000001570">
    <property type="component" value="Chromosome"/>
</dbReference>
<dbReference type="GO" id="GO:0005886">
    <property type="term" value="C:plasma membrane"/>
    <property type="evidence" value="ECO:0007669"/>
    <property type="project" value="UniProtKB-SubCell"/>
</dbReference>
<dbReference type="GO" id="GO:0140911">
    <property type="term" value="F:pore-forming activity"/>
    <property type="evidence" value="ECO:0007669"/>
    <property type="project" value="InterPro"/>
</dbReference>
<dbReference type="InterPro" id="IPR004254">
    <property type="entry name" value="AdipoR/HlyIII-related"/>
</dbReference>
<dbReference type="InterPro" id="IPR005744">
    <property type="entry name" value="Hy-lIII"/>
</dbReference>
<dbReference type="NCBIfam" id="TIGR01065">
    <property type="entry name" value="hlyIII"/>
    <property type="match status" value="1"/>
</dbReference>
<dbReference type="PANTHER" id="PTHR20855">
    <property type="entry name" value="ADIPOR/PROGESTIN RECEPTOR-RELATED"/>
    <property type="match status" value="1"/>
</dbReference>
<dbReference type="PANTHER" id="PTHR20855:SF129">
    <property type="entry name" value="HEMOLYSIN-3 HOMOLOG"/>
    <property type="match status" value="1"/>
</dbReference>
<dbReference type="Pfam" id="PF03006">
    <property type="entry name" value="HlyIII"/>
    <property type="match status" value="1"/>
</dbReference>